<sequence>MAQQVNEWLIALAVAFIRPLSLSLLLPLLKSGSLGAALLRNGVLMSLTFPILPIIYQQKIMMHIGKDYSWLGLVTGEVIIGFSIGFCAAVPFWAVDMAGFLLDTLRGATMGTIFNSTIEAETSLFGLLFSQFLCVIFFISGGMEFILNILYESYQYLPPGRTLLFDQQFLKYIQAEWRTLYQLCISFSLPAIICMVLADLALGLLNRSAQQLNVFFFSMPLKSILVLLTLLISFPYALHHYLVESDKFYIYLKDWFPSV</sequence>
<keyword id="KW-1003">Cell membrane</keyword>
<keyword id="KW-0472">Membrane</keyword>
<keyword id="KW-0653">Protein transport</keyword>
<keyword id="KW-1185">Reference proteome</keyword>
<keyword id="KW-0812">Transmembrane</keyword>
<keyword id="KW-1133">Transmembrane helix</keyword>
<keyword id="KW-0813">Transport</keyword>
<protein>
    <recommendedName>
        <fullName>Secretion system apparatus protein SsaT</fullName>
    </recommendedName>
</protein>
<name>SSAT_SALTY</name>
<gene>
    <name type="primary">ssaT</name>
    <name type="ordered locus">STM1421</name>
</gene>
<dbReference type="EMBL" id="X99944">
    <property type="protein sequence ID" value="CAA68201.1"/>
    <property type="molecule type" value="Genomic_DNA"/>
</dbReference>
<dbReference type="EMBL" id="AE006468">
    <property type="protein sequence ID" value="AAL20345.1"/>
    <property type="molecule type" value="Genomic_DNA"/>
</dbReference>
<dbReference type="RefSeq" id="NP_460386.1">
    <property type="nucleotide sequence ID" value="NC_003197.2"/>
</dbReference>
<dbReference type="RefSeq" id="WP_000068764.1">
    <property type="nucleotide sequence ID" value="NC_003197.2"/>
</dbReference>
<dbReference type="SMR" id="P96068"/>
<dbReference type="STRING" id="99287.STM1421"/>
<dbReference type="PaxDb" id="99287-STM1421"/>
<dbReference type="GeneID" id="1252939"/>
<dbReference type="KEGG" id="stm:STM1421"/>
<dbReference type="PATRIC" id="fig|99287.12.peg.1505"/>
<dbReference type="HOGENOM" id="CLU_063626_0_4_6"/>
<dbReference type="OMA" id="LMQMRAT"/>
<dbReference type="PhylomeDB" id="P96068"/>
<dbReference type="BioCyc" id="SENT99287:STM1421-MONOMER"/>
<dbReference type="Proteomes" id="UP000001014">
    <property type="component" value="Chromosome"/>
</dbReference>
<dbReference type="GO" id="GO:0005886">
    <property type="term" value="C:plasma membrane"/>
    <property type="evidence" value="ECO:0000318"/>
    <property type="project" value="GO_Central"/>
</dbReference>
<dbReference type="GO" id="GO:0006605">
    <property type="term" value="P:protein targeting"/>
    <property type="evidence" value="ECO:0007669"/>
    <property type="project" value="InterPro"/>
</dbReference>
<dbReference type="GO" id="GO:0015031">
    <property type="term" value="P:protein transport"/>
    <property type="evidence" value="ECO:0007669"/>
    <property type="project" value="UniProtKB-KW"/>
</dbReference>
<dbReference type="InterPro" id="IPR002010">
    <property type="entry name" value="T3SS_IM_R"/>
</dbReference>
<dbReference type="InterPro" id="IPR006304">
    <property type="entry name" value="T3SS_SpaR/YscT"/>
</dbReference>
<dbReference type="NCBIfam" id="TIGR01401">
    <property type="entry name" value="fliR_like_III"/>
    <property type="match status" value="1"/>
</dbReference>
<dbReference type="NCBIfam" id="NF011876">
    <property type="entry name" value="PRK15349.1"/>
    <property type="match status" value="1"/>
</dbReference>
<dbReference type="PANTHER" id="PTHR30065">
    <property type="entry name" value="FLAGELLAR BIOSYNTHETIC PROTEIN FLIR"/>
    <property type="match status" value="1"/>
</dbReference>
<dbReference type="PANTHER" id="PTHR30065:SF7">
    <property type="entry name" value="SECRETION SYSTEM APPARATUS PROTEIN SSAT"/>
    <property type="match status" value="1"/>
</dbReference>
<dbReference type="Pfam" id="PF01311">
    <property type="entry name" value="Bac_export_1"/>
    <property type="match status" value="1"/>
</dbReference>
<dbReference type="PRINTS" id="PR00953">
    <property type="entry name" value="TYPE3IMRPROT"/>
</dbReference>
<feature type="chain" id="PRO_0000192062" description="Secretion system apparatus protein SsaT">
    <location>
        <begin position="1"/>
        <end position="259"/>
    </location>
</feature>
<feature type="transmembrane region" description="Helical" evidence="1">
    <location>
        <begin position="9"/>
        <end position="29"/>
    </location>
</feature>
<feature type="transmembrane region" description="Helical" evidence="1">
    <location>
        <begin position="35"/>
        <end position="55"/>
    </location>
</feature>
<feature type="transmembrane region" description="Helical" evidence="1">
    <location>
        <begin position="78"/>
        <end position="98"/>
    </location>
</feature>
<feature type="transmembrane region" description="Helical" evidence="1">
    <location>
        <begin position="127"/>
        <end position="147"/>
    </location>
</feature>
<feature type="transmembrane region" description="Helical" evidence="1">
    <location>
        <begin position="185"/>
        <end position="205"/>
    </location>
</feature>
<feature type="transmembrane region" description="Helical" evidence="1">
    <location>
        <begin position="214"/>
        <end position="234"/>
    </location>
</feature>
<accession>P96068</accession>
<comment type="function">
    <text>Part of a type III secretion system.</text>
</comment>
<comment type="subcellular location">
    <subcellularLocation>
        <location evidence="2">Cell membrane</location>
        <topology evidence="2">Multi-pass membrane protein</topology>
    </subcellularLocation>
</comment>
<comment type="similarity">
    <text evidence="2">Belongs to the FliR/MopE/SpaR family.</text>
</comment>
<evidence type="ECO:0000255" key="1"/>
<evidence type="ECO:0000305" key="2"/>
<reference key="1">
    <citation type="journal article" date="1997" name="Mol. Microbiol.">
        <title>Functional analysis of ssaJ and the ssaK/U operon, 13 genes encoding components of the type III secretion apparatus of Salmonella pathogenicity island 2.</title>
        <authorList>
            <person name="Hensel M."/>
            <person name="Shea J.E."/>
            <person name="Raupach B."/>
            <person name="Monack D."/>
            <person name="Falkow S."/>
            <person name="Gleeson C."/>
            <person name="Kubo T."/>
            <person name="Holden D.W."/>
        </authorList>
    </citation>
    <scope>NUCLEOTIDE SEQUENCE [GENOMIC DNA]</scope>
    <source>
        <strain>LT2</strain>
    </source>
</reference>
<reference key="2">
    <citation type="journal article" date="2001" name="Nature">
        <title>Complete genome sequence of Salmonella enterica serovar Typhimurium LT2.</title>
        <authorList>
            <person name="McClelland M."/>
            <person name="Sanderson K.E."/>
            <person name="Spieth J."/>
            <person name="Clifton S.W."/>
            <person name="Latreille P."/>
            <person name="Courtney L."/>
            <person name="Porwollik S."/>
            <person name="Ali J."/>
            <person name="Dante M."/>
            <person name="Du F."/>
            <person name="Hou S."/>
            <person name="Layman D."/>
            <person name="Leonard S."/>
            <person name="Nguyen C."/>
            <person name="Scott K."/>
            <person name="Holmes A."/>
            <person name="Grewal N."/>
            <person name="Mulvaney E."/>
            <person name="Ryan E."/>
            <person name="Sun H."/>
            <person name="Florea L."/>
            <person name="Miller W."/>
            <person name="Stoneking T."/>
            <person name="Nhan M."/>
            <person name="Waterston R."/>
            <person name="Wilson R.K."/>
        </authorList>
    </citation>
    <scope>NUCLEOTIDE SEQUENCE [LARGE SCALE GENOMIC DNA]</scope>
    <source>
        <strain>LT2 / SGSC1412 / ATCC 700720</strain>
    </source>
</reference>
<organism>
    <name type="scientific">Salmonella typhimurium (strain LT2 / SGSC1412 / ATCC 700720)</name>
    <dbReference type="NCBI Taxonomy" id="99287"/>
    <lineage>
        <taxon>Bacteria</taxon>
        <taxon>Pseudomonadati</taxon>
        <taxon>Pseudomonadota</taxon>
        <taxon>Gammaproteobacteria</taxon>
        <taxon>Enterobacterales</taxon>
        <taxon>Enterobacteriaceae</taxon>
        <taxon>Salmonella</taxon>
    </lineage>
</organism>
<proteinExistence type="inferred from homology"/>